<gene>
    <name type="primary">bacB</name>
</gene>
<proteinExistence type="inferred from homology"/>
<feature type="chain" id="PRO_0000193083" description="Bacitracin synthase 2">
    <location>
        <begin position="1"/>
        <end position="2607"/>
    </location>
</feature>
<feature type="domain" description="Carrier 1" evidence="1">
    <location>
        <begin position="1016"/>
        <end position="1091"/>
    </location>
</feature>
<feature type="domain" description="Carrier 2" evidence="1">
    <location>
        <begin position="2059"/>
        <end position="2133"/>
    </location>
</feature>
<feature type="region of interest" description="Domain 1 (lysine-activating)">
    <location>
        <begin position="535"/>
        <end position="1090"/>
    </location>
</feature>
<feature type="region of interest" description="Domain 2 (D-ornithine-activating)">
    <location>
        <begin position="1547"/>
        <end position="2141"/>
    </location>
</feature>
<feature type="modified residue" description="O-(pantetheine 4'-phosphoryl)serine" evidence="1">
    <location>
        <position position="1051"/>
    </location>
</feature>
<feature type="modified residue" description="O-(pantetheine 4'-phosphoryl)serine" evidence="1">
    <location>
        <position position="2094"/>
    </location>
</feature>
<dbReference type="EC" id="5.1.1.12"/>
<dbReference type="EMBL" id="AF007865">
    <property type="protein sequence ID" value="AAC06347.1"/>
    <property type="molecule type" value="Genomic_DNA"/>
</dbReference>
<dbReference type="PIR" id="T31678">
    <property type="entry name" value="T31678"/>
</dbReference>
<dbReference type="SMR" id="O68007"/>
<dbReference type="UniPathway" id="UPA00179"/>
<dbReference type="GO" id="GO:0005829">
    <property type="term" value="C:cytosol"/>
    <property type="evidence" value="ECO:0007669"/>
    <property type="project" value="TreeGrafter"/>
</dbReference>
<dbReference type="GO" id="GO:0016874">
    <property type="term" value="F:ligase activity"/>
    <property type="evidence" value="ECO:0007669"/>
    <property type="project" value="UniProtKB-KW"/>
</dbReference>
<dbReference type="GO" id="GO:0050157">
    <property type="term" value="F:ornithine racemase activity"/>
    <property type="evidence" value="ECO:0007669"/>
    <property type="project" value="UniProtKB-EC"/>
</dbReference>
<dbReference type="GO" id="GO:0031177">
    <property type="term" value="F:phosphopantetheine binding"/>
    <property type="evidence" value="ECO:0007669"/>
    <property type="project" value="TreeGrafter"/>
</dbReference>
<dbReference type="GO" id="GO:0043041">
    <property type="term" value="P:amino acid activation for nonribosomal peptide biosynthetic process"/>
    <property type="evidence" value="ECO:0007669"/>
    <property type="project" value="TreeGrafter"/>
</dbReference>
<dbReference type="GO" id="GO:0017000">
    <property type="term" value="P:antibiotic biosynthetic process"/>
    <property type="evidence" value="ECO:0007669"/>
    <property type="project" value="UniProtKB-KW"/>
</dbReference>
<dbReference type="GO" id="GO:0008610">
    <property type="term" value="P:lipid biosynthetic process"/>
    <property type="evidence" value="ECO:0007669"/>
    <property type="project" value="UniProtKB-ARBA"/>
</dbReference>
<dbReference type="GO" id="GO:0044550">
    <property type="term" value="P:secondary metabolite biosynthetic process"/>
    <property type="evidence" value="ECO:0007669"/>
    <property type="project" value="TreeGrafter"/>
</dbReference>
<dbReference type="CDD" id="cd17655">
    <property type="entry name" value="A_NRPS_Bac"/>
    <property type="match status" value="1"/>
</dbReference>
<dbReference type="CDD" id="cd17650">
    <property type="entry name" value="A_NRPS_PpsD_like"/>
    <property type="match status" value="1"/>
</dbReference>
<dbReference type="CDD" id="cd19534">
    <property type="entry name" value="E_NRPS"/>
    <property type="match status" value="1"/>
</dbReference>
<dbReference type="CDD" id="cd19531">
    <property type="entry name" value="LCL_NRPS-like"/>
    <property type="match status" value="2"/>
</dbReference>
<dbReference type="FunFam" id="3.30.300.30:FF:000010">
    <property type="entry name" value="Enterobactin synthetase component F"/>
    <property type="match status" value="2"/>
</dbReference>
<dbReference type="FunFam" id="3.40.50.12780:FF:000012">
    <property type="entry name" value="Non-ribosomal peptide synthetase"/>
    <property type="match status" value="2"/>
</dbReference>
<dbReference type="FunFam" id="3.40.50.980:FF:000001">
    <property type="entry name" value="Non-ribosomal peptide synthetase"/>
    <property type="match status" value="2"/>
</dbReference>
<dbReference type="FunFam" id="2.30.38.10:FF:000001">
    <property type="entry name" value="Non-ribosomal peptide synthetase PvdI"/>
    <property type="match status" value="1"/>
</dbReference>
<dbReference type="FunFam" id="1.10.1200.10:FF:000005">
    <property type="entry name" value="Nonribosomal peptide synthetase 1"/>
    <property type="match status" value="2"/>
</dbReference>
<dbReference type="Gene3D" id="3.30.300.30">
    <property type="match status" value="2"/>
</dbReference>
<dbReference type="Gene3D" id="3.40.50.980">
    <property type="match status" value="4"/>
</dbReference>
<dbReference type="Gene3D" id="1.10.1200.10">
    <property type="entry name" value="ACP-like"/>
    <property type="match status" value="2"/>
</dbReference>
<dbReference type="Gene3D" id="3.30.559.10">
    <property type="entry name" value="Chloramphenicol acetyltransferase-like domain"/>
    <property type="match status" value="3"/>
</dbReference>
<dbReference type="Gene3D" id="2.30.38.10">
    <property type="entry name" value="Luciferase, Domain 3"/>
    <property type="match status" value="2"/>
</dbReference>
<dbReference type="Gene3D" id="1.10.10.1830">
    <property type="entry name" value="Non-ribosomal peptide synthase, adenylation domain"/>
    <property type="match status" value="1"/>
</dbReference>
<dbReference type="Gene3D" id="3.30.559.30">
    <property type="entry name" value="Nonribosomal peptide synthetase, condensation domain"/>
    <property type="match status" value="3"/>
</dbReference>
<dbReference type="InterPro" id="IPR010071">
    <property type="entry name" value="AA_adenyl_dom"/>
</dbReference>
<dbReference type="InterPro" id="IPR036736">
    <property type="entry name" value="ACP-like_sf"/>
</dbReference>
<dbReference type="InterPro" id="IPR025110">
    <property type="entry name" value="AMP-bd_C"/>
</dbReference>
<dbReference type="InterPro" id="IPR045851">
    <property type="entry name" value="AMP-bd_C_sf"/>
</dbReference>
<dbReference type="InterPro" id="IPR020845">
    <property type="entry name" value="AMP-binding_CS"/>
</dbReference>
<dbReference type="InterPro" id="IPR000873">
    <property type="entry name" value="AMP-dep_synth/lig_dom"/>
</dbReference>
<dbReference type="InterPro" id="IPR023213">
    <property type="entry name" value="CAT-like_dom_sf"/>
</dbReference>
<dbReference type="InterPro" id="IPR001242">
    <property type="entry name" value="Condensatn"/>
</dbReference>
<dbReference type="InterPro" id="IPR010060">
    <property type="entry name" value="NRPS_synth"/>
</dbReference>
<dbReference type="InterPro" id="IPR009081">
    <property type="entry name" value="PP-bd_ACP"/>
</dbReference>
<dbReference type="InterPro" id="IPR006162">
    <property type="entry name" value="Ppantetheine_attach_site"/>
</dbReference>
<dbReference type="InterPro" id="IPR041464">
    <property type="entry name" value="TubC_N"/>
</dbReference>
<dbReference type="InterPro" id="IPR044894">
    <property type="entry name" value="TubC_N_sf"/>
</dbReference>
<dbReference type="NCBIfam" id="TIGR01733">
    <property type="entry name" value="AA-adenyl-dom"/>
    <property type="match status" value="2"/>
</dbReference>
<dbReference type="NCBIfam" id="TIGR01720">
    <property type="entry name" value="NRPS-para261"/>
    <property type="match status" value="1"/>
</dbReference>
<dbReference type="NCBIfam" id="NF003417">
    <property type="entry name" value="PRK04813.1"/>
    <property type="match status" value="2"/>
</dbReference>
<dbReference type="PANTHER" id="PTHR45527:SF1">
    <property type="entry name" value="FATTY ACID SYNTHASE"/>
    <property type="match status" value="1"/>
</dbReference>
<dbReference type="PANTHER" id="PTHR45527">
    <property type="entry name" value="NONRIBOSOMAL PEPTIDE SYNTHETASE"/>
    <property type="match status" value="1"/>
</dbReference>
<dbReference type="Pfam" id="PF00501">
    <property type="entry name" value="AMP-binding"/>
    <property type="match status" value="2"/>
</dbReference>
<dbReference type="Pfam" id="PF13193">
    <property type="entry name" value="AMP-binding_C"/>
    <property type="match status" value="2"/>
</dbReference>
<dbReference type="Pfam" id="PF00668">
    <property type="entry name" value="Condensation"/>
    <property type="match status" value="3"/>
</dbReference>
<dbReference type="Pfam" id="PF00550">
    <property type="entry name" value="PP-binding"/>
    <property type="match status" value="2"/>
</dbReference>
<dbReference type="Pfam" id="PF18563">
    <property type="entry name" value="TubC_N"/>
    <property type="match status" value="1"/>
</dbReference>
<dbReference type="SUPFAM" id="SSF56801">
    <property type="entry name" value="Acetyl-CoA synthetase-like"/>
    <property type="match status" value="2"/>
</dbReference>
<dbReference type="SUPFAM" id="SSF47336">
    <property type="entry name" value="ACP-like"/>
    <property type="match status" value="2"/>
</dbReference>
<dbReference type="SUPFAM" id="SSF52777">
    <property type="entry name" value="CoA-dependent acyltransferases"/>
    <property type="match status" value="6"/>
</dbReference>
<dbReference type="PROSITE" id="PS00455">
    <property type="entry name" value="AMP_BINDING"/>
    <property type="match status" value="2"/>
</dbReference>
<dbReference type="PROSITE" id="PS50075">
    <property type="entry name" value="CARRIER"/>
    <property type="match status" value="2"/>
</dbReference>
<dbReference type="PROSITE" id="PS00012">
    <property type="entry name" value="PHOSPHOPANTETHEINE"/>
    <property type="match status" value="1"/>
</dbReference>
<accession>O68007</accession>
<organism>
    <name type="scientific">Bacillus licheniformis</name>
    <dbReference type="NCBI Taxonomy" id="1402"/>
    <lineage>
        <taxon>Bacteria</taxon>
        <taxon>Bacillati</taxon>
        <taxon>Bacillota</taxon>
        <taxon>Bacilli</taxon>
        <taxon>Bacillales</taxon>
        <taxon>Bacillaceae</taxon>
        <taxon>Bacillus</taxon>
    </lineage>
</organism>
<reference key="1">
    <citation type="journal article" date="1997" name="Chem. Biol.">
        <title>The bacitracin biosynthesis operon of Bacillus licheniformis ATCC 10716: molecular characterization of three multi-modular peptide synthetases.</title>
        <authorList>
            <person name="Konz D."/>
            <person name="Klens A."/>
            <person name="Schoergendorfer K."/>
            <person name="Marahiel M.A."/>
        </authorList>
    </citation>
    <scope>NUCLEOTIDE SEQUENCE [GENOMIC DNA]</scope>
    <source>
        <strain>ATCC 10716 / DSM 603 / NBRC 12199 / NCIMB 8874 / Tracy I</strain>
    </source>
</reference>
<name>BACB_BACLI</name>
<comment type="function">
    <text>Activates two amino acids and incorporate a D-ornithine from its second active site into bacitracin.</text>
</comment>
<comment type="catalytic activity">
    <reaction>
        <text>L-ornithine = D-ornithine</text>
        <dbReference type="Rhea" id="RHEA:11584"/>
        <dbReference type="ChEBI" id="CHEBI:46911"/>
        <dbReference type="ChEBI" id="CHEBI:57668"/>
        <dbReference type="EC" id="5.1.1.12"/>
    </reaction>
</comment>
<comment type="cofactor">
    <cofactor evidence="2">
        <name>pantetheine 4'-phosphate</name>
        <dbReference type="ChEBI" id="CHEBI:47942"/>
    </cofactor>
    <text evidence="2">Binds 2 phosphopantetheines covalently.</text>
</comment>
<comment type="pathway">
    <text>Antibiotic biosynthesis; bacitracin biosynthesis.</text>
</comment>
<comment type="subunit">
    <text>Large multienzyme complex of BA1, BA2 and BA3.</text>
</comment>
<comment type="domain">
    <text>Consists of two modules with a C-terminal epimerization domain. Each module incorporates one amino acid into the peptide product and can be further subdivided into domains responsible for substrate adenylation, thiolation, condensation (not for the initiation module), and epimerization (optional), and N methylation (optional).</text>
</comment>
<comment type="miscellaneous">
    <text>Bacitracin is a mixture of at least ten cyclic dodecapeptides, that differ by one or two amino acids. The most abundant is bacitracin A, a branched cyclic dodecapeptide. It contains an N-terminal linear pentapeptide moiety (Ile-Cys-Leu-D-Glu-Ile) with an isoleucine-cysteine thiazoline condensation product and a C-terminal heptapeptide ring (Lys-D-Orn-Ile-D-Phe-His-D-Asp-Asn), in which the free alpha-carboxy group of the C-terminal Asn is bound to the epsilon-amino group of Lys.</text>
</comment>
<comment type="similarity">
    <text evidence="2">Belongs to the ATP-dependent AMP-binding enzyme family.</text>
</comment>
<keyword id="KW-0045">Antibiotic biosynthesis</keyword>
<keyword id="KW-0413">Isomerase</keyword>
<keyword id="KW-0436">Ligase</keyword>
<keyword id="KW-0511">Multifunctional enzyme</keyword>
<keyword id="KW-0596">Phosphopantetheine</keyword>
<keyword id="KW-0597">Phosphoprotein</keyword>
<keyword id="KW-0677">Repeat</keyword>
<evidence type="ECO:0000255" key="1">
    <source>
        <dbReference type="PROSITE-ProRule" id="PRU00258"/>
    </source>
</evidence>
<evidence type="ECO:0000305" key="2"/>
<protein>
    <recommendedName>
        <fullName>Bacitracin synthase 2</fullName>
        <shortName>BA2</shortName>
    </recommendedName>
    <domain>
        <recommendedName>
            <fullName>ATP-dependent lysine adenylase</fullName>
            <shortName>LysA</shortName>
        </recommendedName>
        <alternativeName>
            <fullName>Lysine activase</fullName>
        </alternativeName>
    </domain>
    <domain>
        <recommendedName>
            <fullName>ATP-dependent D-ornithine adenylase</fullName>
            <shortName>D-OrnA</shortName>
        </recommendedName>
        <alternativeName>
            <fullName>D-ornithine activase</fullName>
        </alternativeName>
    </domain>
    <domain>
        <recommendedName>
            <fullName>Ornithine racemase</fullName>
            <ecNumber>5.1.1.12</ecNumber>
        </recommendedName>
    </domain>
</protein>
<sequence>MSMSIMDFINDLKKKNITLYHNKGKIKIIGPQELLTADLKQQIKRYKEDIIAALEAGETDIERSFPKAAPSKSGTYPLSREQKRMFILNQLDDSKTAYNMPLAVKINGEVQISRLEQAWKALIKRHESLRTSFVMLDGEPVQKIEQEAEFRLEYSELGDQSIQEKISRFIKPFELEKAPLLRAEIVKVDEAEHMMMVDMHHIISDGVSIGILMKEFADCCEGKELSPLAVQYKDYSEWQRDIEQQSRLKKQEAYWLNTFRGDIPVLNMPLDFPRPKIRSFQGNRTVVELDQDTTKKLKTIAAKNGVTMYMLLLAGYTILLSKYTGQEDIIVGSPIAGRPHADLNGTIGMFVGTLALRNRPKGNMTFSEYVQTVKNNTLKAYENQDYQFDALIEHLGLTHDMSRNPLFDTMFDLQHADDFASEAGGGHFETYDIPFHVAKFDVSLTAFLHGDNLKFDFQYCTDLYKKETVERMAGHFLNVLKDAAHHPELALSEIRMMSEEEKDIILHTFNHEKTDGPKNKTLSRLFEERAEKTPDHTAVIFEDQQLTYRELNEKANQLAWLLREKGVKPDTIVAIMTDRSLEMIIGIIGILKAGGAYLPIDPDYPEDRVKYMLEDSGADMVVIQEPFKSKIDGRQLITAEDTRSFSKENLPNVNKASDLAYVIYTSGSSGRPKGVMTTHRNVVHYVDAFTKRIPLSEHDTVLQVVSFSFDAFSEEVYPILACSGRLVISRKVSDLNIDELVKTIGKYRVTLVSCSPLLLNEIDKNQHLTFHPQMKFISGGDVLKFEYVENIIKGADVYNSYGPTEATVCATYYQLSSADRKKTSIPIGKPLSNYKVYIADQYGRPQPVGVPGELLIGGEGVARGYLNHETLTKAAFVVDESGERVYRTGDLARWLSDGNIEFLGRIDSQVKIRGYRIELEEIEHRLLMNDNINEAIVVAKEDQENSKYLCAYIAFNNKNADIEQVQERLAKDLPEYMIPSCFIKLDQIPRTINGKADLKALPEPDRRAFAQARYEAPRNQTEALLLSIWQDILPAEQIGINDHFFDIGGHSLKAFSMAAKIQSALKVEVTLKEIFNHSTIQDLAAYIAQKQKQVQSDIQKAEKKEYYPLSSAQKRLYILNQIEEGQTAYNMPFAMKIKGELQTDKAEKAFRTLIKRHESSRTSFVTINGEPVQNINEEVTFEMKYRELDNCSLRERMNQFIRPFELEKAPLLRAELVRVNAAEHILLLDMHHIISDGVSIGILMKEWAALYEEKELAPLKIQYKDYSEWQRDPWQKDRLKKQEESWLSVFQNDIPVLNMPTDFPRPQMQSYEGDRIAFAIERELTDKLKKTAKENGVTMYMLLLAGYTILLSKYTGQEDIIVGSPIAGRTREELEQTVGMFVGTLAMRNHPKGGRTFIEYLQDVKENTFNAYENQDYPFDELVDKLDLERDISRNALFDTMFDMQALDDAEPDIEGLHVEPVDLEFQISKFDLSLTAAESAGVITFHLEFCTRLYKKETAETLAQHFVNILRDISDHPQKTLNDISMLSEEERHTVLYQFNDTNTEHPSGIFSELFEEQAEKSPNHPAAVFKDQMLTYRELNEKANQLARTLRQKGVQRESVVGIMAERSLEMLTGILAVLKAGGAYMPIDPGLPKERIQYLITDSGADLLLTQHQLIGSISFAGEIIQIDQADAYDTDGSNLEHLNSPGDLAYVIYTSGTTGNPKGVMVEHRNIIHAHYTWRKHYELASFSVNLLQLASMSFDVFAGDLCRSLLNGGTMYIVPDDVKLEMNLLYDMINKYGIHMLESTPSLIIPLMKYIDHHKLDFSSMKLLIMGSDTCTIKDYKWLVERFGQRMRIINSYGVTEASVDSGYYEEALDRIPEIANTPIGKPLDNTAFYILDPSLNPQPVGVYGELYIGGEGIARGYLNKPELTKERFVPNRFAAGGNMYKTGDLARWLPDGNVEFLGRIDHQVKIRGFRIETGEIETKLLENQNISEAVVIDREDKKGHKYLCAYIVARAKTNTNELREYLSDHLPDYMLPSYFIQINKMPLTPNGKIDRKALPEPAGDVIAASGYEAPRNETEEKLAAVWQEVLDRDKIGINDNFFEIGGDSIKALQIVSKLSRADLKLQVKDLFTNPFIRHLSKYVKKETKARTSEIVQGQVPLTPVQRSFFEANQREQNHYNQAFMLYRENGFAERIVEKVFRKLTEHHDALRMVYWEKNGDIIQHNRGLEDSVFDLYVYDLKTEKNLEKTVYQIATNIQKDISISEGKMIKLCVFKTTEGDHLLIAIHHLLVDGVSWRILFEDFEAAYGQALQGKPIELGYKTDSYKTFSEKLAEYANSKKLLKEQEYWREISKGKMAFLPKHRQAAHDNYENSRTLRISLSQTETEQLLKEAHKAYNTQINDLLLTALLIASRQLTGENRLKILMEGHGRDDILQDVDITRTVGWFTAMYPVFIDLEDEADLSVMIKIVKETLRKIPNNGIGYGILKYLRKDEGLLKDEKPPILFNYLGELDHDLTTEQFSSSKLSAGQSIGEKSARDASVEIDSVVAGRQLMISTTFNEYEYSPDTISELNQAFKESLQMVISHCTGKHETEKTSSDYGYDKLSLEDLEELLNEYESVDS</sequence>